<accession>P0AF93</accession>
<accession>P39330</accession>
<accession>P76806</accession>
<accession>Q2M664</accession>
<proteinExistence type="evidence at protein level"/>
<protein>
    <recommendedName>
        <fullName>2-iminobutanoate/2-iminopropanoate deaminase</fullName>
        <ecNumber evidence="1">3.5.99.10</ecNumber>
    </recommendedName>
    <alternativeName>
        <fullName>Enamine/imine deaminase</fullName>
    </alternativeName>
</protein>
<gene>
    <name type="primary">ridA</name>
    <name type="synonym">yjgF</name>
    <name type="ordered locus">b4243</name>
    <name type="ordered locus">JW5755</name>
</gene>
<name>RIDA_ECOLI</name>
<comment type="function">
    <text evidence="1">Accelerates the release of ammonia from reactive enamine/imine intermediates of the PLP-dependent threonine dehydratase (IlvA) in the low water environment of the cell. It catalyzes the deamination of enamine/imine intermediates to yield 2-ketobutyrate and ammonia. It is required for the detoxification of reactive intermediates of IlvA due to their highly nucleophilic abilities. Involved in the isoleucine biosynthesis.</text>
</comment>
<comment type="catalytic activity">
    <reaction evidence="1">
        <text>2-iminobutanoate + H2O = 2-oxobutanoate + NH4(+)</text>
        <dbReference type="Rhea" id="RHEA:39975"/>
        <dbReference type="ChEBI" id="CHEBI:15377"/>
        <dbReference type="ChEBI" id="CHEBI:16763"/>
        <dbReference type="ChEBI" id="CHEBI:28938"/>
        <dbReference type="ChEBI" id="CHEBI:76545"/>
        <dbReference type="EC" id="3.5.99.10"/>
    </reaction>
</comment>
<comment type="catalytic activity">
    <reaction>
        <text>2-iminopropanoate + H2O = pyruvate + NH4(+)</text>
        <dbReference type="Rhea" id="RHEA:40671"/>
        <dbReference type="ChEBI" id="CHEBI:15361"/>
        <dbReference type="ChEBI" id="CHEBI:15377"/>
        <dbReference type="ChEBI" id="CHEBI:28938"/>
        <dbReference type="ChEBI" id="CHEBI:44400"/>
        <dbReference type="EC" id="3.5.99.10"/>
    </reaction>
</comment>
<comment type="pathway">
    <text evidence="1">Amino-acid biosynthesis; L-isoleucine biosynthesis; 2-oxobutanoate from L-threonine.</text>
</comment>
<comment type="subunit">
    <text evidence="2">Homotrimer.</text>
</comment>
<comment type="subcellular location">
    <subcellularLocation>
        <location evidence="5">Cytoplasm</location>
    </subcellularLocation>
</comment>
<comment type="similarity">
    <text evidence="5">Belongs to the RutC family.</text>
</comment>
<comment type="sequence caution" evidence="5">
    <conflict type="erroneous initiation">
        <sequence resource="EMBL-CDS" id="AAA97140"/>
    </conflict>
    <text>Extended N-terminus.</text>
</comment>
<organism>
    <name type="scientific">Escherichia coli (strain K12)</name>
    <dbReference type="NCBI Taxonomy" id="83333"/>
    <lineage>
        <taxon>Bacteria</taxon>
        <taxon>Pseudomonadati</taxon>
        <taxon>Pseudomonadota</taxon>
        <taxon>Gammaproteobacteria</taxon>
        <taxon>Enterobacterales</taxon>
        <taxon>Enterobacteriaceae</taxon>
        <taxon>Escherichia</taxon>
    </lineage>
</organism>
<feature type="initiator methionine" description="Removed" evidence="3 4">
    <location>
        <position position="1"/>
    </location>
</feature>
<feature type="chain" id="PRO_0000170321" description="2-iminobutanoate/2-iminopropanoate deaminase">
    <location>
        <begin position="2"/>
        <end position="128"/>
    </location>
</feature>
<feature type="binding site" evidence="1">
    <location>
        <position position="105"/>
    </location>
    <ligand>
        <name>substrate</name>
    </ligand>
</feature>
<feature type="site" description="Stabilizes the substrate" evidence="1">
    <location>
        <position position="17"/>
    </location>
</feature>
<feature type="site" description="Important for catalytic activity at high pH" evidence="1">
    <location>
        <position position="120"/>
    </location>
</feature>
<feature type="strand" evidence="6">
    <location>
        <begin position="3"/>
        <end position="5"/>
    </location>
</feature>
<feature type="strand" evidence="6">
    <location>
        <begin position="18"/>
        <end position="22"/>
    </location>
</feature>
<feature type="strand" evidence="6">
    <location>
        <begin position="24"/>
        <end position="29"/>
    </location>
</feature>
<feature type="turn" evidence="6">
    <location>
        <begin position="37"/>
        <end position="39"/>
    </location>
</feature>
<feature type="helix" evidence="6">
    <location>
        <begin position="46"/>
        <end position="63"/>
    </location>
</feature>
<feature type="helix" evidence="6">
    <location>
        <begin position="68"/>
        <end position="70"/>
    </location>
</feature>
<feature type="strand" evidence="6">
    <location>
        <begin position="71"/>
        <end position="79"/>
    </location>
</feature>
<feature type="helix" evidence="6">
    <location>
        <begin position="81"/>
        <end position="83"/>
    </location>
</feature>
<feature type="helix" evidence="6">
    <location>
        <begin position="84"/>
        <end position="97"/>
    </location>
</feature>
<feature type="strand" evidence="6">
    <location>
        <begin position="104"/>
        <end position="109"/>
    </location>
</feature>
<feature type="helix" evidence="6">
    <location>
        <begin position="114"/>
        <end position="116"/>
    </location>
</feature>
<feature type="strand" evidence="6">
    <location>
        <begin position="118"/>
        <end position="126"/>
    </location>
</feature>
<dbReference type="EC" id="3.5.99.10" evidence="1"/>
<dbReference type="EMBL" id="U14003">
    <property type="protein sequence ID" value="AAA97140.1"/>
    <property type="status" value="ALT_INIT"/>
    <property type="molecule type" value="Genomic_DNA"/>
</dbReference>
<dbReference type="EMBL" id="U00096">
    <property type="protein sequence ID" value="AAC77200.2"/>
    <property type="molecule type" value="Genomic_DNA"/>
</dbReference>
<dbReference type="EMBL" id="AP009048">
    <property type="protein sequence ID" value="BAE78242.1"/>
    <property type="molecule type" value="Genomic_DNA"/>
</dbReference>
<dbReference type="RefSeq" id="NP_418664.2">
    <property type="nucleotide sequence ID" value="NC_000913.3"/>
</dbReference>
<dbReference type="RefSeq" id="WP_000047539.1">
    <property type="nucleotide sequence ID" value="NZ_STEB01000013.1"/>
</dbReference>
<dbReference type="PDB" id="1QU9">
    <property type="method" value="X-ray"/>
    <property type="resolution" value="1.20 A"/>
    <property type="chains" value="A/B/C=1-128"/>
</dbReference>
<dbReference type="PDBsum" id="1QU9"/>
<dbReference type="SMR" id="P0AF93"/>
<dbReference type="BioGRID" id="4262720">
    <property type="interactions" value="18"/>
</dbReference>
<dbReference type="DIP" id="DIP-36232N"/>
<dbReference type="FunCoup" id="P0AF93">
    <property type="interactions" value="621"/>
</dbReference>
<dbReference type="STRING" id="511145.b4243"/>
<dbReference type="DrugBank" id="DB03544">
    <property type="generic name" value="S-Phosphocysteine"/>
</dbReference>
<dbReference type="jPOST" id="P0AF93"/>
<dbReference type="PaxDb" id="511145-b4243"/>
<dbReference type="EnsemblBacteria" id="AAC77200">
    <property type="protein sequence ID" value="AAC77200"/>
    <property type="gene ID" value="b4243"/>
</dbReference>
<dbReference type="GeneID" id="93777581"/>
<dbReference type="GeneID" id="948771"/>
<dbReference type="KEGG" id="ecj:JW5755"/>
<dbReference type="KEGG" id="eco:b4243"/>
<dbReference type="KEGG" id="ecoc:C3026_22900"/>
<dbReference type="PATRIC" id="fig|511145.12.peg.4376"/>
<dbReference type="EchoBASE" id="EB2415"/>
<dbReference type="eggNOG" id="COG0251">
    <property type="taxonomic scope" value="Bacteria"/>
</dbReference>
<dbReference type="HOGENOM" id="CLU_100715_7_1_6"/>
<dbReference type="InParanoid" id="P0AF93"/>
<dbReference type="OMA" id="GSYFKEP"/>
<dbReference type="OrthoDB" id="9803101at2"/>
<dbReference type="PhylomeDB" id="P0AF93"/>
<dbReference type="BioCyc" id="EcoCyc:G7877-MONOMER"/>
<dbReference type="BRENDA" id="3.5.99.10">
    <property type="organism ID" value="2026"/>
</dbReference>
<dbReference type="EvolutionaryTrace" id="P0AF93"/>
<dbReference type="PRO" id="PR:P0AF93"/>
<dbReference type="Proteomes" id="UP000000625">
    <property type="component" value="Chromosome"/>
</dbReference>
<dbReference type="GO" id="GO:0005829">
    <property type="term" value="C:cytosol"/>
    <property type="evidence" value="ECO:0000314"/>
    <property type="project" value="EcoCyc"/>
</dbReference>
<dbReference type="GO" id="GO:0016020">
    <property type="term" value="C:membrane"/>
    <property type="evidence" value="ECO:0007005"/>
    <property type="project" value="UniProtKB"/>
</dbReference>
<dbReference type="GO" id="GO:0032991">
    <property type="term" value="C:protein-containing complex"/>
    <property type="evidence" value="ECO:0000314"/>
    <property type="project" value="EcoCyc"/>
</dbReference>
<dbReference type="GO" id="GO:0120242">
    <property type="term" value="F:2-iminobutanoate deaminase activity"/>
    <property type="evidence" value="ECO:0000250"/>
    <property type="project" value="UniProtKB"/>
</dbReference>
<dbReference type="GO" id="GO:0120243">
    <property type="term" value="F:2-iminopropanoate deaminase activity"/>
    <property type="evidence" value="ECO:0007669"/>
    <property type="project" value="RHEA"/>
</dbReference>
<dbReference type="GO" id="GO:0019239">
    <property type="term" value="F:deaminase activity"/>
    <property type="evidence" value="ECO:0000314"/>
    <property type="project" value="EcoCyc"/>
</dbReference>
<dbReference type="GO" id="GO:0042802">
    <property type="term" value="F:identical protein binding"/>
    <property type="evidence" value="ECO:0000314"/>
    <property type="project" value="EcoCyc"/>
</dbReference>
<dbReference type="GO" id="GO:0051082">
    <property type="term" value="F:unfolded protein binding"/>
    <property type="evidence" value="ECO:0000314"/>
    <property type="project" value="EcoCyc"/>
</dbReference>
<dbReference type="GO" id="GO:0009097">
    <property type="term" value="P:isoleucine biosynthetic process"/>
    <property type="evidence" value="ECO:0007669"/>
    <property type="project" value="UniProtKB-KW"/>
</dbReference>
<dbReference type="GO" id="GO:0070207">
    <property type="term" value="P:protein homotrimerization"/>
    <property type="evidence" value="ECO:0000314"/>
    <property type="project" value="EcoCyc"/>
</dbReference>
<dbReference type="GO" id="GO:0009636">
    <property type="term" value="P:response to toxic substance"/>
    <property type="evidence" value="ECO:0000314"/>
    <property type="project" value="EcoCyc"/>
</dbReference>
<dbReference type="CDD" id="cd00448">
    <property type="entry name" value="YjgF_YER057c_UK114_family"/>
    <property type="match status" value="1"/>
</dbReference>
<dbReference type="FunFam" id="3.30.1330.40:FF:000001">
    <property type="entry name" value="L-PSP family endoribonuclease"/>
    <property type="match status" value="1"/>
</dbReference>
<dbReference type="Gene3D" id="3.30.1330.40">
    <property type="entry name" value="RutC-like"/>
    <property type="match status" value="1"/>
</dbReference>
<dbReference type="InterPro" id="IPR006056">
    <property type="entry name" value="RidA"/>
</dbReference>
<dbReference type="InterPro" id="IPR019897">
    <property type="entry name" value="RidA_CS"/>
</dbReference>
<dbReference type="InterPro" id="IPR035959">
    <property type="entry name" value="RutC-like_sf"/>
</dbReference>
<dbReference type="InterPro" id="IPR006175">
    <property type="entry name" value="YjgF/YER057c/UK114"/>
</dbReference>
<dbReference type="NCBIfam" id="TIGR00004">
    <property type="entry name" value="Rid family detoxifying hydrolase"/>
    <property type="match status" value="1"/>
</dbReference>
<dbReference type="PANTHER" id="PTHR11803">
    <property type="entry name" value="2-IMINOBUTANOATE/2-IMINOPROPANOATE DEAMINASE RIDA"/>
    <property type="match status" value="1"/>
</dbReference>
<dbReference type="PANTHER" id="PTHR11803:SF39">
    <property type="entry name" value="2-IMINOBUTANOATE_2-IMINOPROPANOATE DEAMINASE"/>
    <property type="match status" value="1"/>
</dbReference>
<dbReference type="Pfam" id="PF01042">
    <property type="entry name" value="Ribonuc_L-PSP"/>
    <property type="match status" value="1"/>
</dbReference>
<dbReference type="SUPFAM" id="SSF55298">
    <property type="entry name" value="YjgF-like"/>
    <property type="match status" value="1"/>
</dbReference>
<dbReference type="PROSITE" id="PS01094">
    <property type="entry name" value="UPF0076"/>
    <property type="match status" value="1"/>
</dbReference>
<sequence>MSKTIATENAPAAIGPYVQGVDLGNMIITSGQIPVNPKTGEVPADVAAQARQSLDNVKAIVEAAGLKVGDIVKTTVFVKDLNDFATVNATYEAFFTEHNATFPARSCVEVARLPKDVKIEIEAIAVRR</sequence>
<reference key="1">
    <citation type="journal article" date="1995" name="Nucleic Acids Res.">
        <title>Analysis of the Escherichia coli genome VI: DNA sequence of the region from 92.8 through 100 minutes.</title>
        <authorList>
            <person name="Burland V.D."/>
            <person name="Plunkett G. III"/>
            <person name="Sofia H.J."/>
            <person name="Daniels D.L."/>
            <person name="Blattner F.R."/>
        </authorList>
    </citation>
    <scope>NUCLEOTIDE SEQUENCE [LARGE SCALE GENOMIC DNA]</scope>
    <source>
        <strain>K12 / MG1655 / ATCC 47076</strain>
    </source>
</reference>
<reference key="2">
    <citation type="journal article" date="1997" name="Science">
        <title>The complete genome sequence of Escherichia coli K-12.</title>
        <authorList>
            <person name="Blattner F.R."/>
            <person name="Plunkett G. III"/>
            <person name="Bloch C.A."/>
            <person name="Perna N.T."/>
            <person name="Burland V."/>
            <person name="Riley M."/>
            <person name="Collado-Vides J."/>
            <person name="Glasner J.D."/>
            <person name="Rode C.K."/>
            <person name="Mayhew G.F."/>
            <person name="Gregor J."/>
            <person name="Davis N.W."/>
            <person name="Kirkpatrick H.A."/>
            <person name="Goeden M.A."/>
            <person name="Rose D.J."/>
            <person name="Mau B."/>
            <person name="Shao Y."/>
        </authorList>
    </citation>
    <scope>NUCLEOTIDE SEQUENCE [LARGE SCALE GENOMIC DNA]</scope>
    <source>
        <strain>K12 / MG1655 / ATCC 47076</strain>
    </source>
</reference>
<reference key="3">
    <citation type="journal article" date="2006" name="Mol. Syst. Biol.">
        <title>Highly accurate genome sequences of Escherichia coli K-12 strains MG1655 and W3110.</title>
        <authorList>
            <person name="Hayashi K."/>
            <person name="Morooka N."/>
            <person name="Yamamoto Y."/>
            <person name="Fujita K."/>
            <person name="Isono K."/>
            <person name="Choi S."/>
            <person name="Ohtsubo E."/>
            <person name="Baba T."/>
            <person name="Wanner B.L."/>
            <person name="Mori H."/>
            <person name="Horiuchi T."/>
        </authorList>
    </citation>
    <scope>NUCLEOTIDE SEQUENCE [LARGE SCALE GENOMIC DNA]</scope>
    <source>
        <strain>K12 / W3110 / ATCC 27325 / DSM 5911</strain>
    </source>
</reference>
<reference key="4">
    <citation type="journal article" date="1997" name="Electrophoresis">
        <title>Comparing the predicted and observed properties of proteins encoded in the genome of Escherichia coli K-12.</title>
        <authorList>
            <person name="Link A.J."/>
            <person name="Robison K."/>
            <person name="Church G.M."/>
        </authorList>
    </citation>
    <scope>PROTEIN SEQUENCE OF 2-13</scope>
    <source>
        <strain>K12 / EMG2</strain>
    </source>
</reference>
<reference key="5">
    <citation type="submission" date="1996-02" db="UniProtKB">
        <authorList>
            <person name="Frutiger S."/>
            <person name="Hughes G.J."/>
            <person name="Pasquali C."/>
            <person name="Hochstrasser D.F."/>
        </authorList>
    </citation>
    <scope>PROTEIN SEQUENCE OF 2-12</scope>
    <source>
        <strain>K12 / W3110 / ATCC 27325 / DSM 5911</strain>
    </source>
</reference>
<reference key="6">
    <citation type="journal article" date="1999" name="Electrophoresis">
        <title>Enrichment of low abundance proteins of Escherichia coli by hydroxyapatite chromatography.</title>
        <authorList>
            <person name="Fountoulakis M."/>
            <person name="Takacs M.-F."/>
            <person name="Berndt P."/>
            <person name="Langen H."/>
            <person name="Takacs B."/>
        </authorList>
    </citation>
    <scope>IDENTIFICATION BY MASS SPECTROMETRY</scope>
    <source>
        <strain>B / BL21</strain>
    </source>
</reference>
<reference key="7">
    <citation type="journal article" date="1999" name="Protein Sci.">
        <title>A test case for structure-based functional assignment: the 1.2-A crystal structure of the yjgF gene product from Escherichia coli.</title>
        <authorList>
            <person name="Volz K."/>
        </authorList>
    </citation>
    <scope>X-RAY CRYSTALLOGRAPHY (1.2 ANGSTROMS)</scope>
    <scope>SUBUNIT</scope>
    <scope>PUTATIVE SUBSTRATE BINDING SITE</scope>
</reference>
<keyword id="KW-0002">3D-structure</keyword>
<keyword id="KW-0028">Amino-acid biosynthesis</keyword>
<keyword id="KW-0100">Branched-chain amino acid biosynthesis</keyword>
<keyword id="KW-0963">Cytoplasm</keyword>
<keyword id="KW-0216">Detoxification</keyword>
<keyword id="KW-0903">Direct protein sequencing</keyword>
<keyword id="KW-0378">Hydrolase</keyword>
<keyword id="KW-0412">Isoleucine biosynthesis</keyword>
<keyword id="KW-1185">Reference proteome</keyword>
<evidence type="ECO:0000250" key="1">
    <source>
        <dbReference type="UniProtKB" id="Q7CP78"/>
    </source>
</evidence>
<evidence type="ECO:0000269" key="2">
    <source>
    </source>
</evidence>
<evidence type="ECO:0000269" key="3">
    <source>
    </source>
</evidence>
<evidence type="ECO:0000269" key="4">
    <source ref="5"/>
</evidence>
<evidence type="ECO:0000305" key="5"/>
<evidence type="ECO:0007829" key="6">
    <source>
        <dbReference type="PDB" id="1QU9"/>
    </source>
</evidence>